<keyword id="KW-0030">Aminoacyl-tRNA synthetase</keyword>
<keyword id="KW-0067">ATP-binding</keyword>
<keyword id="KW-0963">Cytoplasm</keyword>
<keyword id="KW-0436">Ligase</keyword>
<keyword id="KW-0547">Nucleotide-binding</keyword>
<keyword id="KW-0648">Protein biosynthesis</keyword>
<keyword id="KW-1185">Reference proteome</keyword>
<accession>Q9ZDB1</accession>
<feature type="chain" id="PRO_0000152075" description="Leucine--tRNA ligase">
    <location>
        <begin position="1"/>
        <end position="828"/>
    </location>
</feature>
<feature type="short sequence motif" description="'HIGH' region">
    <location>
        <begin position="36"/>
        <end position="46"/>
    </location>
</feature>
<feature type="short sequence motif" description="'KMSKS' region">
    <location>
        <begin position="595"/>
        <end position="599"/>
    </location>
</feature>
<feature type="binding site" evidence="1">
    <location>
        <position position="598"/>
    </location>
    <ligand>
        <name>ATP</name>
        <dbReference type="ChEBI" id="CHEBI:30616"/>
    </ligand>
</feature>
<reference key="1">
    <citation type="journal article" date="1998" name="Nature">
        <title>The genome sequence of Rickettsia prowazekii and the origin of mitochondria.</title>
        <authorList>
            <person name="Andersson S.G.E."/>
            <person name="Zomorodipour A."/>
            <person name="Andersson J.O."/>
            <person name="Sicheritz-Ponten T."/>
            <person name="Alsmark U.C.M."/>
            <person name="Podowski R.M."/>
            <person name="Naeslund A.K."/>
            <person name="Eriksson A.-S."/>
            <person name="Winkler H.H."/>
            <person name="Kurland C.G."/>
        </authorList>
    </citation>
    <scope>NUCLEOTIDE SEQUENCE [LARGE SCALE GENOMIC DNA]</scope>
    <source>
        <strain>Madrid E</strain>
    </source>
</reference>
<comment type="catalytic activity">
    <reaction evidence="1">
        <text>tRNA(Leu) + L-leucine + ATP = L-leucyl-tRNA(Leu) + AMP + diphosphate</text>
        <dbReference type="Rhea" id="RHEA:11688"/>
        <dbReference type="Rhea" id="RHEA-COMP:9613"/>
        <dbReference type="Rhea" id="RHEA-COMP:9622"/>
        <dbReference type="ChEBI" id="CHEBI:30616"/>
        <dbReference type="ChEBI" id="CHEBI:33019"/>
        <dbReference type="ChEBI" id="CHEBI:57427"/>
        <dbReference type="ChEBI" id="CHEBI:78442"/>
        <dbReference type="ChEBI" id="CHEBI:78494"/>
        <dbReference type="ChEBI" id="CHEBI:456215"/>
        <dbReference type="EC" id="6.1.1.4"/>
    </reaction>
</comment>
<comment type="subcellular location">
    <subcellularLocation>
        <location evidence="1">Cytoplasm</location>
    </subcellularLocation>
</comment>
<comment type="similarity">
    <text evidence="1">Belongs to the class-I aminoacyl-tRNA synthetase family.</text>
</comment>
<organism>
    <name type="scientific">Rickettsia prowazekii (strain Madrid E)</name>
    <dbReference type="NCBI Taxonomy" id="272947"/>
    <lineage>
        <taxon>Bacteria</taxon>
        <taxon>Pseudomonadati</taxon>
        <taxon>Pseudomonadota</taxon>
        <taxon>Alphaproteobacteria</taxon>
        <taxon>Rickettsiales</taxon>
        <taxon>Rickettsiaceae</taxon>
        <taxon>Rickettsieae</taxon>
        <taxon>Rickettsia</taxon>
        <taxon>typhus group</taxon>
    </lineage>
</organism>
<evidence type="ECO:0000255" key="1">
    <source>
        <dbReference type="HAMAP-Rule" id="MF_00049"/>
    </source>
</evidence>
<name>SYL_RICPR</name>
<protein>
    <recommendedName>
        <fullName evidence="1">Leucine--tRNA ligase</fullName>
        <ecNumber evidence="1">6.1.1.4</ecNumber>
    </recommendedName>
    <alternativeName>
        <fullName evidence="1">Leucyl-tRNA synthetase</fullName>
        <shortName evidence="1">LeuRS</shortName>
    </alternativeName>
</protein>
<gene>
    <name evidence="1" type="primary">leuS</name>
    <name type="ordered locus">RP421</name>
</gene>
<proteinExistence type="inferred from homology"/>
<dbReference type="EC" id="6.1.1.4" evidence="1"/>
<dbReference type="EMBL" id="AJ235271">
    <property type="protein sequence ID" value="CAA14878.1"/>
    <property type="molecule type" value="Genomic_DNA"/>
</dbReference>
<dbReference type="PIR" id="D71700">
    <property type="entry name" value="D71700"/>
</dbReference>
<dbReference type="RefSeq" id="NP_220802.1">
    <property type="nucleotide sequence ID" value="NC_000963.1"/>
</dbReference>
<dbReference type="RefSeq" id="WP_004599464.1">
    <property type="nucleotide sequence ID" value="NC_000963.1"/>
</dbReference>
<dbReference type="SMR" id="Q9ZDB1"/>
<dbReference type="STRING" id="272947.gene:17555501"/>
<dbReference type="EnsemblBacteria" id="CAA14878">
    <property type="protein sequence ID" value="CAA14878"/>
    <property type="gene ID" value="CAA14878"/>
</dbReference>
<dbReference type="GeneID" id="57569546"/>
<dbReference type="KEGG" id="rpr:RP421"/>
<dbReference type="PATRIC" id="fig|272947.5.peg.434"/>
<dbReference type="eggNOG" id="COG0495">
    <property type="taxonomic scope" value="Bacteria"/>
</dbReference>
<dbReference type="HOGENOM" id="CLU_004427_0_0_5"/>
<dbReference type="OrthoDB" id="9810365at2"/>
<dbReference type="Proteomes" id="UP000002480">
    <property type="component" value="Chromosome"/>
</dbReference>
<dbReference type="GO" id="GO:0005737">
    <property type="term" value="C:cytoplasm"/>
    <property type="evidence" value="ECO:0007669"/>
    <property type="project" value="UniProtKB-SubCell"/>
</dbReference>
<dbReference type="GO" id="GO:0002161">
    <property type="term" value="F:aminoacyl-tRNA deacylase activity"/>
    <property type="evidence" value="ECO:0007669"/>
    <property type="project" value="InterPro"/>
</dbReference>
<dbReference type="GO" id="GO:0005524">
    <property type="term" value="F:ATP binding"/>
    <property type="evidence" value="ECO:0007669"/>
    <property type="project" value="UniProtKB-UniRule"/>
</dbReference>
<dbReference type="GO" id="GO:0004823">
    <property type="term" value="F:leucine-tRNA ligase activity"/>
    <property type="evidence" value="ECO:0007669"/>
    <property type="project" value="UniProtKB-UniRule"/>
</dbReference>
<dbReference type="GO" id="GO:0006429">
    <property type="term" value="P:leucyl-tRNA aminoacylation"/>
    <property type="evidence" value="ECO:0007669"/>
    <property type="project" value="UniProtKB-UniRule"/>
</dbReference>
<dbReference type="CDD" id="cd07958">
    <property type="entry name" value="Anticodon_Ia_Leu_BEm"/>
    <property type="match status" value="1"/>
</dbReference>
<dbReference type="CDD" id="cd00812">
    <property type="entry name" value="LeuRS_core"/>
    <property type="match status" value="1"/>
</dbReference>
<dbReference type="FunFam" id="1.10.730.10:FF:000002">
    <property type="entry name" value="Leucine--tRNA ligase"/>
    <property type="match status" value="1"/>
</dbReference>
<dbReference type="FunFam" id="3.40.50.620:FF:000003">
    <property type="entry name" value="Leucine--tRNA ligase"/>
    <property type="match status" value="1"/>
</dbReference>
<dbReference type="FunFam" id="3.40.50.620:FF:000051">
    <property type="entry name" value="Leucine--tRNA ligase"/>
    <property type="match status" value="1"/>
</dbReference>
<dbReference type="Gene3D" id="2.20.28.290">
    <property type="match status" value="1"/>
</dbReference>
<dbReference type="Gene3D" id="3.10.20.590">
    <property type="match status" value="1"/>
</dbReference>
<dbReference type="Gene3D" id="3.40.50.620">
    <property type="entry name" value="HUPs"/>
    <property type="match status" value="2"/>
</dbReference>
<dbReference type="Gene3D" id="1.10.730.10">
    <property type="entry name" value="Isoleucyl-tRNA Synthetase, Domain 1"/>
    <property type="match status" value="2"/>
</dbReference>
<dbReference type="HAMAP" id="MF_00049_B">
    <property type="entry name" value="Leu_tRNA_synth_B"/>
    <property type="match status" value="1"/>
</dbReference>
<dbReference type="InterPro" id="IPR001412">
    <property type="entry name" value="aa-tRNA-synth_I_CS"/>
</dbReference>
<dbReference type="InterPro" id="IPR002300">
    <property type="entry name" value="aa-tRNA-synth_Ia"/>
</dbReference>
<dbReference type="InterPro" id="IPR002302">
    <property type="entry name" value="Leu-tRNA-ligase"/>
</dbReference>
<dbReference type="InterPro" id="IPR025709">
    <property type="entry name" value="Leu_tRNA-synth_edit"/>
</dbReference>
<dbReference type="InterPro" id="IPR013155">
    <property type="entry name" value="M/V/L/I-tRNA-synth_anticd-bd"/>
</dbReference>
<dbReference type="InterPro" id="IPR015413">
    <property type="entry name" value="Methionyl/Leucyl_tRNA_Synth"/>
</dbReference>
<dbReference type="InterPro" id="IPR014729">
    <property type="entry name" value="Rossmann-like_a/b/a_fold"/>
</dbReference>
<dbReference type="InterPro" id="IPR009080">
    <property type="entry name" value="tRNAsynth_Ia_anticodon-bd"/>
</dbReference>
<dbReference type="InterPro" id="IPR009008">
    <property type="entry name" value="Val/Leu/Ile-tRNA-synth_edit"/>
</dbReference>
<dbReference type="NCBIfam" id="TIGR00396">
    <property type="entry name" value="leuS_bact"/>
    <property type="match status" value="1"/>
</dbReference>
<dbReference type="PANTHER" id="PTHR43740:SF2">
    <property type="entry name" value="LEUCINE--TRNA LIGASE, MITOCHONDRIAL"/>
    <property type="match status" value="1"/>
</dbReference>
<dbReference type="PANTHER" id="PTHR43740">
    <property type="entry name" value="LEUCYL-TRNA SYNTHETASE"/>
    <property type="match status" value="1"/>
</dbReference>
<dbReference type="Pfam" id="PF08264">
    <property type="entry name" value="Anticodon_1"/>
    <property type="match status" value="1"/>
</dbReference>
<dbReference type="Pfam" id="PF00133">
    <property type="entry name" value="tRNA-synt_1"/>
    <property type="match status" value="2"/>
</dbReference>
<dbReference type="Pfam" id="PF13603">
    <property type="entry name" value="tRNA-synt_1_2"/>
    <property type="match status" value="1"/>
</dbReference>
<dbReference type="Pfam" id="PF09334">
    <property type="entry name" value="tRNA-synt_1g"/>
    <property type="match status" value="1"/>
</dbReference>
<dbReference type="PRINTS" id="PR00985">
    <property type="entry name" value="TRNASYNTHLEU"/>
</dbReference>
<dbReference type="SUPFAM" id="SSF47323">
    <property type="entry name" value="Anticodon-binding domain of a subclass of class I aminoacyl-tRNA synthetases"/>
    <property type="match status" value="1"/>
</dbReference>
<dbReference type="SUPFAM" id="SSF52374">
    <property type="entry name" value="Nucleotidylyl transferase"/>
    <property type="match status" value="1"/>
</dbReference>
<dbReference type="SUPFAM" id="SSF50677">
    <property type="entry name" value="ValRS/IleRS/LeuRS editing domain"/>
    <property type="match status" value="1"/>
</dbReference>
<dbReference type="PROSITE" id="PS00178">
    <property type="entry name" value="AA_TRNA_LIGASE_I"/>
    <property type="match status" value="1"/>
</dbReference>
<sequence>MHKIEKKWQKIWQEEKAFQVSNESSKPKYYVLEMLPYPSGKIHIGHVRNYSIGDVIARFMTMQGFNVLHPMGWDAFGLPAENAAIKNNSRPQDWTYSNIEYMKKQLQSMGFAYDWTREINSCDPEYYKHEQKFFLELYDRNLVYQKESLVNWDPVDNTVLANEQVVDGRGWRSGAIIEKRYLKQWFLKITDYAEELLNEIQNLKDWPAAVRVMQEEWIGKSTGVNFHFKVKYHENTTIEVFSTKPETIFGASFIGIAFNHPIIEQLICKTPEIVNFITKCSYITRSSEIDKAEKEGIFSGLYVIHPFDANIFLPVIITNFVLMDYGTGAIFGCPAHDKRDHELAIKMNLPIKQVIETGNIQEGILINSDWLNGLTSSEAKQKVIEKFEKLGIGKRSVNYRLKDWSISRQRFWGCPIPMIHCKTCGVVPVPYKDLPVTLPDDVSFDSNYNPLEHHSSWKYVNCPKCDNSAIRETDTFDTFFESSWYFTRYCNSNAVEMTDKKACNYWLPVDKYIGGIEHAVMHLLYARFFTKLMNEHNYVSIREPFKGLFTQGMVLHATYKDENNNWLYPAEVVKKGNEFFHKENNTRVVQGRIEKMSKSKKNIIDLETIREQYSADAIRLFVLSDSPPEKDLEWSASGIEGCSRFINKLENMFEAIFSLKDDMKSEINKDLNRLIHLTIKHVADDIKTFSLNRAIARMRTLTNAIYYEISKDRIDVRTIKYGFNVLVQLLNPFIPHITEEIWQKLGNKERLYKSVFAEFDESILELSTYIMAVQVNGKLRDTYEFDVDISEDEVKQITVNLPKVQKFLAGKEPRNIILVPRKIVNIIV</sequence>